<dbReference type="EC" id="6.1.1.14" evidence="1"/>
<dbReference type="EMBL" id="CP000817">
    <property type="protein sequence ID" value="ACA41190.1"/>
    <property type="molecule type" value="Genomic_DNA"/>
</dbReference>
<dbReference type="RefSeq" id="WP_012295244.1">
    <property type="nucleotide sequence ID" value="NC_010382.1"/>
</dbReference>
<dbReference type="SMR" id="B1HTI6"/>
<dbReference type="EnsemblBacteria" id="ACA41190">
    <property type="protein sequence ID" value="ACA41190"/>
    <property type="gene ID" value="Bsph_3706"/>
</dbReference>
<dbReference type="KEGG" id="lsp:Bsph_3706"/>
<dbReference type="HOGENOM" id="CLU_015515_2_1_9"/>
<dbReference type="Proteomes" id="UP000002164">
    <property type="component" value="Chromosome"/>
</dbReference>
<dbReference type="GO" id="GO:0005737">
    <property type="term" value="C:cytoplasm"/>
    <property type="evidence" value="ECO:0007669"/>
    <property type="project" value="UniProtKB-SubCell"/>
</dbReference>
<dbReference type="GO" id="GO:0005524">
    <property type="term" value="F:ATP binding"/>
    <property type="evidence" value="ECO:0007669"/>
    <property type="project" value="UniProtKB-UniRule"/>
</dbReference>
<dbReference type="GO" id="GO:0140096">
    <property type="term" value="F:catalytic activity, acting on a protein"/>
    <property type="evidence" value="ECO:0007669"/>
    <property type="project" value="UniProtKB-ARBA"/>
</dbReference>
<dbReference type="GO" id="GO:0004820">
    <property type="term" value="F:glycine-tRNA ligase activity"/>
    <property type="evidence" value="ECO:0000250"/>
    <property type="project" value="UniProtKB"/>
</dbReference>
<dbReference type="GO" id="GO:0046983">
    <property type="term" value="F:protein dimerization activity"/>
    <property type="evidence" value="ECO:0000250"/>
    <property type="project" value="UniProtKB"/>
</dbReference>
<dbReference type="GO" id="GO:0016740">
    <property type="term" value="F:transferase activity"/>
    <property type="evidence" value="ECO:0007669"/>
    <property type="project" value="UniProtKB-ARBA"/>
</dbReference>
<dbReference type="GO" id="GO:0006426">
    <property type="term" value="P:glycyl-tRNA aminoacylation"/>
    <property type="evidence" value="ECO:0007669"/>
    <property type="project" value="UniProtKB-UniRule"/>
</dbReference>
<dbReference type="CDD" id="cd00774">
    <property type="entry name" value="GlyRS-like_core"/>
    <property type="match status" value="1"/>
</dbReference>
<dbReference type="CDD" id="cd00858">
    <property type="entry name" value="GlyRS_anticodon"/>
    <property type="match status" value="1"/>
</dbReference>
<dbReference type="FunFam" id="3.40.50.800:FF:000002">
    <property type="entry name" value="Glycine--tRNA ligase"/>
    <property type="match status" value="1"/>
</dbReference>
<dbReference type="Gene3D" id="3.40.50.800">
    <property type="entry name" value="Anticodon-binding domain"/>
    <property type="match status" value="1"/>
</dbReference>
<dbReference type="Gene3D" id="3.30.930.10">
    <property type="entry name" value="Bira Bifunctional Protein, Domain 2"/>
    <property type="match status" value="1"/>
</dbReference>
<dbReference type="HAMAP" id="MF_00253_B">
    <property type="entry name" value="Gly_tRNA_synth_B"/>
    <property type="match status" value="1"/>
</dbReference>
<dbReference type="InterPro" id="IPR002314">
    <property type="entry name" value="aa-tRNA-synt_IIb"/>
</dbReference>
<dbReference type="InterPro" id="IPR006195">
    <property type="entry name" value="aa-tRNA-synth_II"/>
</dbReference>
<dbReference type="InterPro" id="IPR045864">
    <property type="entry name" value="aa-tRNA-synth_II/BPL/LPL"/>
</dbReference>
<dbReference type="InterPro" id="IPR004154">
    <property type="entry name" value="Anticodon-bd"/>
</dbReference>
<dbReference type="InterPro" id="IPR036621">
    <property type="entry name" value="Anticodon-bd_dom_sf"/>
</dbReference>
<dbReference type="InterPro" id="IPR027031">
    <property type="entry name" value="Gly-tRNA_synthase/POLG2"/>
</dbReference>
<dbReference type="InterPro" id="IPR022961">
    <property type="entry name" value="Gly_tRNA_ligase_bac"/>
</dbReference>
<dbReference type="InterPro" id="IPR033731">
    <property type="entry name" value="GlyRS-like_core"/>
</dbReference>
<dbReference type="InterPro" id="IPR002315">
    <property type="entry name" value="tRNA-synt_gly"/>
</dbReference>
<dbReference type="NCBIfam" id="TIGR00389">
    <property type="entry name" value="glyS_dimeric"/>
    <property type="match status" value="1"/>
</dbReference>
<dbReference type="NCBIfam" id="NF003211">
    <property type="entry name" value="PRK04173.1"/>
    <property type="match status" value="1"/>
</dbReference>
<dbReference type="PANTHER" id="PTHR10745:SF8">
    <property type="entry name" value="DNA POLYMERASE SUBUNIT GAMMA-2, MITOCHONDRIAL"/>
    <property type="match status" value="1"/>
</dbReference>
<dbReference type="PANTHER" id="PTHR10745">
    <property type="entry name" value="GLYCYL-TRNA SYNTHETASE/DNA POLYMERASE SUBUNIT GAMMA-2"/>
    <property type="match status" value="1"/>
</dbReference>
<dbReference type="Pfam" id="PF03129">
    <property type="entry name" value="HGTP_anticodon"/>
    <property type="match status" value="1"/>
</dbReference>
<dbReference type="Pfam" id="PF00587">
    <property type="entry name" value="tRNA-synt_2b"/>
    <property type="match status" value="1"/>
</dbReference>
<dbReference type="PRINTS" id="PR01043">
    <property type="entry name" value="TRNASYNTHGLY"/>
</dbReference>
<dbReference type="SUPFAM" id="SSF52954">
    <property type="entry name" value="Class II aaRS ABD-related"/>
    <property type="match status" value="1"/>
</dbReference>
<dbReference type="SUPFAM" id="SSF55681">
    <property type="entry name" value="Class II aaRS and biotin synthetases"/>
    <property type="match status" value="1"/>
</dbReference>
<dbReference type="PROSITE" id="PS50862">
    <property type="entry name" value="AA_TRNA_LIGASE_II"/>
    <property type="match status" value="1"/>
</dbReference>
<sequence>MANKSMETIVSLAKHRGFVFPGSEIYGGLANTWDYGPLGVELKNNIKKAWWQKFVQESEHNVGIDAAILMNPKAWVASGHVGNFNDPMIDCKSCKARHRADKIIEDAALAKGDEIIVDGMTFDQMKETMIKYDVVCPDCGKADFTDIRQFNLMFKTFQGVTESSTNEIFLRPETAQGIFVNFKNVQRSMRKRTPFGIAQIGKSFRNEITPGNFTFRTREFEQMELEFFCKPGEDLEWHSYWKEFCKNWLLNLGMKEDSMRLRDHEDDELSHYSNATTDIEFKFPFGWGELWGIADRTDYDLKQHMEHSGEDFTYIDPVSNDRYIPYCIEPSLGADRVTLAFLCDAYDEEELEGDDKRTVLRFHPAIAPFKAAVLPLSKKLSDEATDVWAELRKAFPVDFDESQSIGKRYRRQDEIGTPFCITYDFDSKEDGQVTVRHRDSMTQERMPISEVKAYIEKHLQF</sequence>
<keyword id="KW-0030">Aminoacyl-tRNA synthetase</keyword>
<keyword id="KW-0067">ATP-binding</keyword>
<keyword id="KW-0963">Cytoplasm</keyword>
<keyword id="KW-0436">Ligase</keyword>
<keyword id="KW-0547">Nucleotide-binding</keyword>
<keyword id="KW-0648">Protein biosynthesis</keyword>
<proteinExistence type="inferred from homology"/>
<evidence type="ECO:0000255" key="1">
    <source>
        <dbReference type="HAMAP-Rule" id="MF_00253"/>
    </source>
</evidence>
<organism>
    <name type="scientific">Lysinibacillus sphaericus (strain C3-41)</name>
    <dbReference type="NCBI Taxonomy" id="444177"/>
    <lineage>
        <taxon>Bacteria</taxon>
        <taxon>Bacillati</taxon>
        <taxon>Bacillota</taxon>
        <taxon>Bacilli</taxon>
        <taxon>Bacillales</taxon>
        <taxon>Bacillaceae</taxon>
        <taxon>Lysinibacillus</taxon>
    </lineage>
</organism>
<accession>B1HTI6</accession>
<reference key="1">
    <citation type="journal article" date="2008" name="J. Bacteriol.">
        <title>Complete genome sequence of the mosquitocidal bacterium Bacillus sphaericus C3-41 and comparison with those of closely related Bacillus species.</title>
        <authorList>
            <person name="Hu X."/>
            <person name="Fan W."/>
            <person name="Han B."/>
            <person name="Liu H."/>
            <person name="Zheng D."/>
            <person name="Li Q."/>
            <person name="Dong W."/>
            <person name="Yan J."/>
            <person name="Gao M."/>
            <person name="Berry C."/>
            <person name="Yuan Z."/>
        </authorList>
    </citation>
    <scope>NUCLEOTIDE SEQUENCE [LARGE SCALE GENOMIC DNA]</scope>
    <source>
        <strain>C3-41</strain>
    </source>
</reference>
<name>SYG_LYSSC</name>
<comment type="function">
    <text evidence="1">Catalyzes the attachment of glycine to tRNA(Gly).</text>
</comment>
<comment type="catalytic activity">
    <reaction evidence="1">
        <text>tRNA(Gly) + glycine + ATP = glycyl-tRNA(Gly) + AMP + diphosphate</text>
        <dbReference type="Rhea" id="RHEA:16013"/>
        <dbReference type="Rhea" id="RHEA-COMP:9664"/>
        <dbReference type="Rhea" id="RHEA-COMP:9683"/>
        <dbReference type="ChEBI" id="CHEBI:30616"/>
        <dbReference type="ChEBI" id="CHEBI:33019"/>
        <dbReference type="ChEBI" id="CHEBI:57305"/>
        <dbReference type="ChEBI" id="CHEBI:78442"/>
        <dbReference type="ChEBI" id="CHEBI:78522"/>
        <dbReference type="ChEBI" id="CHEBI:456215"/>
        <dbReference type="EC" id="6.1.1.14"/>
    </reaction>
</comment>
<comment type="subunit">
    <text evidence="1">Homodimer.</text>
</comment>
<comment type="subcellular location">
    <subcellularLocation>
        <location evidence="1">Cytoplasm</location>
    </subcellularLocation>
</comment>
<comment type="similarity">
    <text evidence="1">Belongs to the class-II aminoacyl-tRNA synthetase family.</text>
</comment>
<gene>
    <name evidence="1" type="primary">glyQS</name>
    <name type="ordered locus">Bsph_3706</name>
</gene>
<protein>
    <recommendedName>
        <fullName evidence="1">Glycine--tRNA ligase</fullName>
        <ecNumber evidence="1">6.1.1.14</ecNumber>
    </recommendedName>
    <alternativeName>
        <fullName evidence="1">Glycyl-tRNA synthetase</fullName>
        <shortName evidence="1">GlyRS</shortName>
    </alternativeName>
</protein>
<feature type="chain" id="PRO_1000101167" description="Glycine--tRNA ligase">
    <location>
        <begin position="1"/>
        <end position="461"/>
    </location>
</feature>
<feature type="binding site" evidence="1">
    <location>
        <position position="99"/>
    </location>
    <ligand>
        <name>substrate</name>
    </ligand>
</feature>
<feature type="binding site" evidence="1">
    <location>
        <position position="173"/>
    </location>
    <ligand>
        <name>substrate</name>
    </ligand>
</feature>
<feature type="binding site" evidence="1">
    <location>
        <begin position="205"/>
        <end position="207"/>
    </location>
    <ligand>
        <name>ATP</name>
        <dbReference type="ChEBI" id="CHEBI:30616"/>
    </ligand>
</feature>
<feature type="binding site" evidence="1">
    <location>
        <begin position="215"/>
        <end position="220"/>
    </location>
    <ligand>
        <name>ATP</name>
        <dbReference type="ChEBI" id="CHEBI:30616"/>
    </ligand>
</feature>
<feature type="binding site" evidence="1">
    <location>
        <begin position="220"/>
        <end position="224"/>
    </location>
    <ligand>
        <name>substrate</name>
    </ligand>
</feature>
<feature type="binding site" evidence="1">
    <location>
        <begin position="289"/>
        <end position="290"/>
    </location>
    <ligand>
        <name>ATP</name>
        <dbReference type="ChEBI" id="CHEBI:30616"/>
    </ligand>
</feature>
<feature type="binding site" evidence="1">
    <location>
        <begin position="329"/>
        <end position="333"/>
    </location>
    <ligand>
        <name>substrate</name>
    </ligand>
</feature>
<feature type="binding site" evidence="1">
    <location>
        <begin position="333"/>
        <end position="336"/>
    </location>
    <ligand>
        <name>ATP</name>
        <dbReference type="ChEBI" id="CHEBI:30616"/>
    </ligand>
</feature>